<proteinExistence type="inferred from homology"/>
<evidence type="ECO:0000255" key="1">
    <source>
        <dbReference type="HAMAP-Rule" id="MF_01264"/>
    </source>
</evidence>
<reference key="1">
    <citation type="journal article" date="2002" name="Proc. Natl. Acad. Sci. U.S.A.">
        <title>The complete genome of hyperthermophile Methanopyrus kandleri AV19 and monophyly of archaeal methanogens.</title>
        <authorList>
            <person name="Slesarev A.I."/>
            <person name="Mezhevaya K.V."/>
            <person name="Makarova K.S."/>
            <person name="Polushin N.N."/>
            <person name="Shcherbinina O.V."/>
            <person name="Shakhova V.V."/>
            <person name="Belova G.I."/>
            <person name="Aravind L."/>
            <person name="Natale D.A."/>
            <person name="Rogozin I.B."/>
            <person name="Tatusov R.L."/>
            <person name="Wolf Y.I."/>
            <person name="Stetter K.O."/>
            <person name="Malykh A.G."/>
            <person name="Koonin E.V."/>
            <person name="Kozyavkin S.A."/>
        </authorList>
    </citation>
    <scope>NUCLEOTIDE SEQUENCE [LARGE SCALE GENOMIC DNA]</scope>
    <source>
        <strain>AV19 / DSM 6324 / JCM 9639 / NBRC 100938</strain>
    </source>
</reference>
<gene>
    <name evidence="1" type="primary">cca</name>
    <name type="ordered locus">MK1366</name>
</gene>
<sequence length="485" mass="55774">MSLEEVLDEIRREVTPDPEERELVEGFARRILSEVRDRLKERDPDAEVELIGSVARDTWLPGASDVDVFCVFPKDRDLDEIVEVTLEVGREAIEALGGEAREEYAHHPYIGGEVEHRGRTFEVDVVPCYDTEPGEVITPVDRTPHHNRYVEEHLEDTVEARLLKAFVKAIDAYGAEVRVKGFSGYLCELLAIHYGSFEEVLREAVRTWRPGFVIDLEGFVGEVYEDYDEVRETFEDQDPALIVLDPVDPERNVAAALSRRQLTRFILAARAFLGDPSPEFFRGRKPEPVSGEKVRDWFERNPTHVVAIEVRLPDEVEDIYWPQLEKTARSLSRVLENEGFEVRRWHVMRDSEEEHGYVLLEFEHGKLPELEWRVGPSGWVREDRVRGFVRAHGRFWVEEDGKLATRAERKFVRPEDLLGRLEGADRQTLLSHGFGKDLARSSEGEVRLLSAEELAELADRDPELGKALAEFMRGDPLSELVRDRL</sequence>
<organism>
    <name type="scientific">Methanopyrus kandleri (strain AV19 / DSM 6324 / JCM 9639 / NBRC 100938)</name>
    <dbReference type="NCBI Taxonomy" id="190192"/>
    <lineage>
        <taxon>Archaea</taxon>
        <taxon>Methanobacteriati</taxon>
        <taxon>Methanobacteriota</taxon>
        <taxon>Methanomada group</taxon>
        <taxon>Methanopyri</taxon>
        <taxon>Methanopyrales</taxon>
        <taxon>Methanopyraceae</taxon>
        <taxon>Methanopyrus</taxon>
    </lineage>
</organism>
<dbReference type="EC" id="2.7.7.72" evidence="1"/>
<dbReference type="EMBL" id="AE009439">
    <property type="protein sequence ID" value="AAM02579.1"/>
    <property type="molecule type" value="Genomic_DNA"/>
</dbReference>
<dbReference type="RefSeq" id="WP_011019734.1">
    <property type="nucleotide sequence ID" value="NC_003551.1"/>
</dbReference>
<dbReference type="SMR" id="Q8TGY5"/>
<dbReference type="FunCoup" id="Q8TGY5">
    <property type="interactions" value="5"/>
</dbReference>
<dbReference type="STRING" id="190192.MK1366"/>
<dbReference type="PaxDb" id="190192-MK1366"/>
<dbReference type="EnsemblBacteria" id="AAM02579">
    <property type="protein sequence ID" value="AAM02579"/>
    <property type="gene ID" value="MK1366"/>
</dbReference>
<dbReference type="GeneID" id="1477961"/>
<dbReference type="KEGG" id="mka:MK1366"/>
<dbReference type="PATRIC" id="fig|190192.8.peg.1518"/>
<dbReference type="HOGENOM" id="CLU_044679_1_0_2"/>
<dbReference type="InParanoid" id="Q8TGY5"/>
<dbReference type="OrthoDB" id="7378at2157"/>
<dbReference type="Proteomes" id="UP000001826">
    <property type="component" value="Chromosome"/>
</dbReference>
<dbReference type="GO" id="GO:0005524">
    <property type="term" value="F:ATP binding"/>
    <property type="evidence" value="ECO:0007669"/>
    <property type="project" value="UniProtKB-UniRule"/>
</dbReference>
<dbReference type="GO" id="GO:0004810">
    <property type="term" value="F:CCA tRNA nucleotidyltransferase activity"/>
    <property type="evidence" value="ECO:0007669"/>
    <property type="project" value="UniProtKB-UniRule"/>
</dbReference>
<dbReference type="GO" id="GO:0000287">
    <property type="term" value="F:magnesium ion binding"/>
    <property type="evidence" value="ECO:0007669"/>
    <property type="project" value="UniProtKB-UniRule"/>
</dbReference>
<dbReference type="GO" id="GO:0000049">
    <property type="term" value="F:tRNA binding"/>
    <property type="evidence" value="ECO:0007669"/>
    <property type="project" value="UniProtKB-UniRule"/>
</dbReference>
<dbReference type="GO" id="GO:0042245">
    <property type="term" value="P:RNA repair"/>
    <property type="evidence" value="ECO:0007669"/>
    <property type="project" value="UniProtKB-KW"/>
</dbReference>
<dbReference type="GO" id="GO:0001680">
    <property type="term" value="P:tRNA 3'-terminal CCA addition"/>
    <property type="evidence" value="ECO:0007669"/>
    <property type="project" value="UniProtKB-UniRule"/>
</dbReference>
<dbReference type="CDD" id="cd05400">
    <property type="entry name" value="NT_2-5OAS_ClassI-CCAase"/>
    <property type="match status" value="1"/>
</dbReference>
<dbReference type="Gene3D" id="3.30.70.1550">
    <property type="entry name" value="Archaeal tRNA CCA-adding enzyme catalytic domain"/>
    <property type="match status" value="1"/>
</dbReference>
<dbReference type="Gene3D" id="3.30.460.10">
    <property type="entry name" value="Beta Polymerase, domain 2"/>
    <property type="match status" value="1"/>
</dbReference>
<dbReference type="Gene3D" id="1.10.1410.30">
    <property type="entry name" value="CCA tRNA nucleotidyltransferase, domain 2"/>
    <property type="match status" value="1"/>
</dbReference>
<dbReference type="Gene3D" id="3.30.70.590">
    <property type="entry name" value="Poly(A) polymerase predicted RNA binding domain"/>
    <property type="match status" value="1"/>
</dbReference>
<dbReference type="HAMAP" id="MF_01264">
    <property type="entry name" value="CCA_arch"/>
    <property type="match status" value="1"/>
</dbReference>
<dbReference type="InterPro" id="IPR048833">
    <property type="entry name" value="CAA_C"/>
</dbReference>
<dbReference type="InterPro" id="IPR008229">
    <property type="entry name" value="CCA-adding_arc"/>
</dbReference>
<dbReference type="InterPro" id="IPR042090">
    <property type="entry name" value="CCA_tRNA_nucleotrans_2"/>
</dbReference>
<dbReference type="InterPro" id="IPR006116">
    <property type="entry name" value="NT_2-5OAS_ClassI-CCAase"/>
</dbReference>
<dbReference type="InterPro" id="IPR043519">
    <property type="entry name" value="NT_sf"/>
</dbReference>
<dbReference type="InterPro" id="IPR011068">
    <property type="entry name" value="NuclTrfase_I-like_C"/>
</dbReference>
<dbReference type="InterPro" id="IPR002934">
    <property type="entry name" value="Polymerase_NTP_transf_dom"/>
</dbReference>
<dbReference type="InterPro" id="IPR015329">
    <property type="entry name" value="tRNA_NucTransf2"/>
</dbReference>
<dbReference type="NCBIfam" id="TIGR03671">
    <property type="entry name" value="cca_archaeal"/>
    <property type="match status" value="1"/>
</dbReference>
<dbReference type="PANTHER" id="PTHR39643">
    <property type="entry name" value="CCA-ADDING ENZYME"/>
    <property type="match status" value="1"/>
</dbReference>
<dbReference type="PANTHER" id="PTHR39643:SF1">
    <property type="entry name" value="CCA-ADDING ENZYME"/>
    <property type="match status" value="1"/>
</dbReference>
<dbReference type="Pfam" id="PF21133">
    <property type="entry name" value="CAA_C"/>
    <property type="match status" value="1"/>
</dbReference>
<dbReference type="Pfam" id="PF01909">
    <property type="entry name" value="NTP_transf_2"/>
    <property type="match status" value="1"/>
</dbReference>
<dbReference type="Pfam" id="PF09249">
    <property type="entry name" value="tRNA_NucTransf2"/>
    <property type="match status" value="1"/>
</dbReference>
<dbReference type="PIRSF" id="PIRSF005335">
    <property type="entry name" value="CCA_arch"/>
    <property type="match status" value="1"/>
</dbReference>
<dbReference type="SUPFAM" id="SSF81301">
    <property type="entry name" value="Nucleotidyltransferase"/>
    <property type="match status" value="1"/>
</dbReference>
<dbReference type="SUPFAM" id="SSF55003">
    <property type="entry name" value="PAP/Archaeal CCA-adding enzyme, C-terminal domain"/>
    <property type="match status" value="1"/>
</dbReference>
<dbReference type="SUPFAM" id="SSF81631">
    <property type="entry name" value="PAP/OAS1 substrate-binding domain"/>
    <property type="match status" value="1"/>
</dbReference>
<accession>Q8TGY5</accession>
<feature type="chain" id="PRO_0000139070" description="CCA-adding enzyme">
    <location>
        <begin position="1"/>
        <end position="485"/>
    </location>
</feature>
<feature type="binding site" evidence="1">
    <location>
        <position position="53"/>
    </location>
    <ligand>
        <name>ATP</name>
        <dbReference type="ChEBI" id="CHEBI:30616"/>
    </ligand>
</feature>
<feature type="binding site" evidence="1">
    <location>
        <position position="53"/>
    </location>
    <ligand>
        <name>CTP</name>
        <dbReference type="ChEBI" id="CHEBI:37563"/>
    </ligand>
</feature>
<feature type="binding site" evidence="1">
    <location>
        <position position="56"/>
    </location>
    <ligand>
        <name>ATP</name>
        <dbReference type="ChEBI" id="CHEBI:30616"/>
    </ligand>
</feature>
<feature type="binding site" evidence="1">
    <location>
        <position position="56"/>
    </location>
    <ligand>
        <name>CTP</name>
        <dbReference type="ChEBI" id="CHEBI:37563"/>
    </ligand>
</feature>
<feature type="binding site" evidence="1">
    <location>
        <position position="65"/>
    </location>
    <ligand>
        <name>Mg(2+)</name>
        <dbReference type="ChEBI" id="CHEBI:18420"/>
    </ligand>
</feature>
<feature type="binding site" evidence="1">
    <location>
        <position position="67"/>
    </location>
    <ligand>
        <name>Mg(2+)</name>
        <dbReference type="ChEBI" id="CHEBI:18420"/>
    </ligand>
</feature>
<feature type="binding site" evidence="1">
    <location>
        <position position="124"/>
    </location>
    <ligand>
        <name>Mg(2+)</name>
        <dbReference type="ChEBI" id="CHEBI:18420"/>
    </ligand>
</feature>
<feature type="binding site" evidence="1">
    <location>
        <position position="146"/>
    </location>
    <ligand>
        <name>ATP</name>
        <dbReference type="ChEBI" id="CHEBI:30616"/>
    </ligand>
</feature>
<feature type="binding site" evidence="1">
    <location>
        <position position="146"/>
    </location>
    <ligand>
        <name>CTP</name>
        <dbReference type="ChEBI" id="CHEBI:37563"/>
    </ligand>
</feature>
<feature type="binding site" evidence="1">
    <location>
        <position position="164"/>
    </location>
    <ligand>
        <name>ATP</name>
        <dbReference type="ChEBI" id="CHEBI:30616"/>
    </ligand>
</feature>
<feature type="binding site" evidence="1">
    <location>
        <position position="164"/>
    </location>
    <ligand>
        <name>CTP</name>
        <dbReference type="ChEBI" id="CHEBI:37563"/>
    </ligand>
</feature>
<feature type="binding site" evidence="1">
    <location>
        <position position="173"/>
    </location>
    <ligand>
        <name>ATP</name>
        <dbReference type="ChEBI" id="CHEBI:30616"/>
    </ligand>
</feature>
<feature type="binding site" evidence="1">
    <location>
        <position position="173"/>
    </location>
    <ligand>
        <name>CTP</name>
        <dbReference type="ChEBI" id="CHEBI:37563"/>
    </ligand>
</feature>
<keyword id="KW-0067">ATP-binding</keyword>
<keyword id="KW-0460">Magnesium</keyword>
<keyword id="KW-0479">Metal-binding</keyword>
<keyword id="KW-0547">Nucleotide-binding</keyword>
<keyword id="KW-0548">Nucleotidyltransferase</keyword>
<keyword id="KW-1185">Reference proteome</keyword>
<keyword id="KW-0692">RNA repair</keyword>
<keyword id="KW-0694">RNA-binding</keyword>
<keyword id="KW-0808">Transferase</keyword>
<keyword id="KW-0819">tRNA processing</keyword>
<comment type="function">
    <text evidence="1">Catalyzes the addition and repair of the essential 3'-terminal CCA sequence in tRNAs without using a nucleic acid template. Adds these three nucleotides in the order of C, C, and A to the tRNA nucleotide-73, using CTP and ATP as substrates and producing inorganic pyrophosphate. tRNA 3'-terminal CCA addition is required both for tRNA processing and repair. Also involved in tRNA surveillance by mediating tandem CCA addition to generate a CCACCA at the 3' terminus of unstable tRNAs. While stable tRNAs receive only 3'-terminal CCA, unstable tRNAs are marked with CCACCA and rapidly degraded.</text>
</comment>
<comment type="catalytic activity">
    <reaction evidence="1">
        <text>a tRNA precursor + 2 CTP + ATP = a tRNA with a 3' CCA end + 3 diphosphate</text>
        <dbReference type="Rhea" id="RHEA:14433"/>
        <dbReference type="Rhea" id="RHEA-COMP:10465"/>
        <dbReference type="Rhea" id="RHEA-COMP:10468"/>
        <dbReference type="ChEBI" id="CHEBI:30616"/>
        <dbReference type="ChEBI" id="CHEBI:33019"/>
        <dbReference type="ChEBI" id="CHEBI:37563"/>
        <dbReference type="ChEBI" id="CHEBI:74896"/>
        <dbReference type="ChEBI" id="CHEBI:83071"/>
        <dbReference type="EC" id="2.7.7.72"/>
    </reaction>
</comment>
<comment type="catalytic activity">
    <reaction evidence="1">
        <text>a tRNA with a 3' CCA end + 2 CTP + ATP = a tRNA with a 3' CCACCA end + 3 diphosphate</text>
        <dbReference type="Rhea" id="RHEA:76235"/>
        <dbReference type="Rhea" id="RHEA-COMP:10468"/>
        <dbReference type="Rhea" id="RHEA-COMP:18655"/>
        <dbReference type="ChEBI" id="CHEBI:30616"/>
        <dbReference type="ChEBI" id="CHEBI:33019"/>
        <dbReference type="ChEBI" id="CHEBI:37563"/>
        <dbReference type="ChEBI" id="CHEBI:83071"/>
        <dbReference type="ChEBI" id="CHEBI:195187"/>
    </reaction>
    <physiologicalReaction direction="left-to-right" evidence="1">
        <dbReference type="Rhea" id="RHEA:76236"/>
    </physiologicalReaction>
</comment>
<comment type="cofactor">
    <cofactor evidence="1">
        <name>Mg(2+)</name>
        <dbReference type="ChEBI" id="CHEBI:18420"/>
    </cofactor>
</comment>
<comment type="subunit">
    <text evidence="1">Homodimer.</text>
</comment>
<comment type="miscellaneous">
    <text evidence="1">A single active site specifically recognizes both ATP and CTP and is responsible for their addition.</text>
</comment>
<comment type="similarity">
    <text evidence="1">Belongs to the tRNA nucleotidyltransferase/poly(A) polymerase family. Archaeal CCA-adding enzyme subfamily.</text>
</comment>
<name>CCA_METKA</name>
<protein>
    <recommendedName>
        <fullName evidence="1">CCA-adding enzyme</fullName>
        <ecNumber evidence="1">2.7.7.72</ecNumber>
    </recommendedName>
    <alternativeName>
        <fullName evidence="1">CCA tRNA nucleotidyltransferase</fullName>
    </alternativeName>
    <alternativeName>
        <fullName evidence="1">tRNA CCA-pyrophosphorylase</fullName>
    </alternativeName>
    <alternativeName>
        <fullName evidence="1">tRNA adenylyl-/cytidylyl- transferase</fullName>
    </alternativeName>
    <alternativeName>
        <fullName evidence="1">tRNA nucleotidyltransferase</fullName>
    </alternativeName>
    <alternativeName>
        <fullName evidence="1">tRNA-NT</fullName>
    </alternativeName>
</protein>